<reference key="1">
    <citation type="journal article" date="1991" name="FEMS Microbiol. Lett.">
        <title>The nucleotide sequence of the glucoamylase gene GLA1 from Saccharomycopsis fibuligera KZ.</title>
        <authorList>
            <person name="Hostinova E."/>
            <person name="Balanova J."/>
            <person name="Gasperik J."/>
        </authorList>
    </citation>
    <scope>NUCLEOTIDE SEQUENCE [GENOMIC DNA]</scope>
    <source>
        <strain>KZ</strain>
    </source>
</reference>
<reference key="2">
    <citation type="submission" date="1997-02" db="EMBL/GenBank/DDBJ databases">
        <authorList>
            <person name="Hostinova E."/>
        </authorList>
    </citation>
    <scope>SEQUENCE REVISION</scope>
    <source>
        <strain>KZ</strain>
    </source>
</reference>
<accession>P26989</accession>
<accession>P78745</accession>
<proteinExistence type="inferred from homology"/>
<gene>
    <name type="primary">GLA1</name>
</gene>
<evidence type="ECO:0000250" key="1"/>
<evidence type="ECO:0000255" key="2"/>
<evidence type="ECO:0000255" key="3">
    <source>
        <dbReference type="PROSITE-ProRule" id="PRU10051"/>
    </source>
</evidence>
<evidence type="ECO:0000305" key="4"/>
<name>AMYH_SACFI</name>
<feature type="signal peptide">
    <location>
        <begin position="1"/>
        <end position="27"/>
    </location>
</feature>
<feature type="chain" id="PRO_0000001476" description="Glucoamylase GLA1">
    <location>
        <begin position="28"/>
        <end position="519"/>
    </location>
</feature>
<feature type="active site" description="Proton acceptor" evidence="3">
    <location>
        <position position="234"/>
    </location>
</feature>
<feature type="active site" description="Proton donor" evidence="3">
    <location>
        <position position="237"/>
    </location>
</feature>
<feature type="binding site" evidence="1">
    <location>
        <position position="166"/>
    </location>
    <ligand>
        <name>substrate</name>
    </ligand>
</feature>
<feature type="glycosylation site" description="N-linked (GlcNAc...) asparagine" evidence="2">
    <location>
        <position position="115"/>
    </location>
</feature>
<feature type="glycosylation site" description="N-linked (GlcNAc...) asparagine" evidence="2">
    <location>
        <position position="127"/>
    </location>
</feature>
<feature type="glycosylation site" description="N-linked (GlcNAc...) asparagine" evidence="2">
    <location>
        <position position="205"/>
    </location>
</feature>
<dbReference type="EC" id="3.2.1.3"/>
<dbReference type="EMBL" id="X58117">
    <property type="protein sequence ID" value="CAA41120.1"/>
    <property type="molecule type" value="Genomic_DNA"/>
</dbReference>
<dbReference type="SMR" id="P26989"/>
<dbReference type="CAZy" id="GH15">
    <property type="family name" value="Glycoside Hydrolase Family 15"/>
</dbReference>
<dbReference type="GlyCosmos" id="P26989">
    <property type="glycosylation" value="3 sites, No reported glycans"/>
</dbReference>
<dbReference type="GO" id="GO:0000324">
    <property type="term" value="C:fungal-type vacuole"/>
    <property type="evidence" value="ECO:0007669"/>
    <property type="project" value="TreeGrafter"/>
</dbReference>
<dbReference type="GO" id="GO:0004339">
    <property type="term" value="F:glucan 1,4-alpha-glucosidase activity"/>
    <property type="evidence" value="ECO:0007669"/>
    <property type="project" value="UniProtKB-EC"/>
</dbReference>
<dbReference type="GO" id="GO:0000272">
    <property type="term" value="P:polysaccharide catabolic process"/>
    <property type="evidence" value="ECO:0007669"/>
    <property type="project" value="UniProtKB-KW"/>
</dbReference>
<dbReference type="Gene3D" id="1.50.10.10">
    <property type="match status" value="1"/>
</dbReference>
<dbReference type="InterPro" id="IPR008928">
    <property type="entry name" value="6-hairpin_glycosidase_sf"/>
</dbReference>
<dbReference type="InterPro" id="IPR012341">
    <property type="entry name" value="6hp_glycosidase-like_sf"/>
</dbReference>
<dbReference type="InterPro" id="IPR011613">
    <property type="entry name" value="GH15-like"/>
</dbReference>
<dbReference type="InterPro" id="IPR000165">
    <property type="entry name" value="Glucoamylase"/>
</dbReference>
<dbReference type="InterPro" id="IPR046966">
    <property type="entry name" value="Glucoamylase_active_site"/>
</dbReference>
<dbReference type="PANTHER" id="PTHR31616:SF9">
    <property type="entry name" value="GLUCOAMYLASE, INTRACELLULAR SPORULATION-SPECIFIC"/>
    <property type="match status" value="1"/>
</dbReference>
<dbReference type="PANTHER" id="PTHR31616">
    <property type="entry name" value="TREHALASE"/>
    <property type="match status" value="1"/>
</dbReference>
<dbReference type="Pfam" id="PF00723">
    <property type="entry name" value="Glyco_hydro_15"/>
    <property type="match status" value="1"/>
</dbReference>
<dbReference type="PRINTS" id="PR00736">
    <property type="entry name" value="GLHYDRLASE15"/>
</dbReference>
<dbReference type="SUPFAM" id="SSF48208">
    <property type="entry name" value="Six-hairpin glycosidases"/>
    <property type="match status" value="1"/>
</dbReference>
<dbReference type="PROSITE" id="PS00820">
    <property type="entry name" value="GLUCOAMYLASE"/>
    <property type="match status" value="1"/>
</dbReference>
<comment type="catalytic activity">
    <reaction>
        <text>Hydrolysis of terminal (1-&gt;4)-linked alpha-D-glucose residues successively from non-reducing ends of the chains with release of beta-D-glucose.</text>
        <dbReference type="EC" id="3.2.1.3"/>
    </reaction>
</comment>
<comment type="similarity">
    <text evidence="4">Belongs to the glycosyl hydrolase 15 family.</text>
</comment>
<sequence>MRFGVLISVFVAIVSALPLQEGPLNKRAYPSFEAYSNYKVDRTDLETFLDKQKDVSLYYLLQNIAYPEGQFNDGVPGTVIASPSTSNPDYYYQWTRDSAITFLTVLSELEDNNFNTTLAKAVEYYINTSYNLQRTSNPSGSFDDENHKGLGEPKFNTDGSAYTGAWGRPQNDGPALRAYAISRYLNDVNSLNKGKLVLTDSGDINFSSTEDIYKNIIKPDLEYVIGYWDSTGFDLWEENQGRHFFTSLVQQKALAYAVDIAKSFDDGDFANTLSSTASTLESYLSGSDGGFVNTDVNHIVENPDLLQQNSRQGLDSATYIGPLLTHDIGESSSTPFDVDNEYVLQSYYLLLEDNKDRYSVNSAYSAGAAIGRYPEDVYNGDGSSEGNPWFLATAYAAQVPYKLVYDAKSASNDITINKINYDFFNKYIVDLSTINSGYQSSDSVTIKSGSDEFNTVADNLVTFGDSFLQVILDHINDDGSLNEQLNRNTGYSTSAYSLTWSSGALLEAIRLRNKVKALA</sequence>
<organism>
    <name type="scientific">Saccharomycopsis fibuligera</name>
    <name type="common">Yeast</name>
    <dbReference type="NCBI Taxonomy" id="4944"/>
    <lineage>
        <taxon>Eukaryota</taxon>
        <taxon>Fungi</taxon>
        <taxon>Dikarya</taxon>
        <taxon>Ascomycota</taxon>
        <taxon>Saccharomycotina</taxon>
        <taxon>Saccharomycetes</taxon>
        <taxon>Saccharomycopsidaceae</taxon>
        <taxon>Saccharomycopsis</taxon>
    </lineage>
</organism>
<protein>
    <recommendedName>
        <fullName>Glucoamylase GLA1</fullName>
        <ecNumber>3.2.1.3</ecNumber>
    </recommendedName>
    <alternativeName>
        <fullName>1,4-alpha-D-glucan glucohydrolase</fullName>
    </alternativeName>
    <alternativeName>
        <fullName>Glucan 1,4-alpha-glucosidase</fullName>
    </alternativeName>
</protein>
<keyword id="KW-0119">Carbohydrate metabolism</keyword>
<keyword id="KW-0325">Glycoprotein</keyword>
<keyword id="KW-0326">Glycosidase</keyword>
<keyword id="KW-0378">Hydrolase</keyword>
<keyword id="KW-0624">Polysaccharide degradation</keyword>
<keyword id="KW-0732">Signal</keyword>